<feature type="chain" id="PRO_0000073971" description="DNA-directed RNA polymerase III subunit RPC5">
    <location>
        <begin position="1"/>
        <end position="710"/>
    </location>
</feature>
<feature type="region of interest" description="Disordered" evidence="3">
    <location>
        <begin position="146"/>
        <end position="169"/>
    </location>
</feature>
<feature type="region of interest" description="Disordered" evidence="3">
    <location>
        <begin position="498"/>
        <end position="526"/>
    </location>
</feature>
<feature type="region of interest" description="Required for Pol III complex stability" evidence="2">
    <location>
        <begin position="558"/>
        <end position="710"/>
    </location>
</feature>
<feature type="compositionally biased region" description="Basic and acidic residues" evidence="3">
    <location>
        <begin position="146"/>
        <end position="155"/>
    </location>
</feature>
<feature type="compositionally biased region" description="Acidic residues" evidence="3">
    <location>
        <begin position="502"/>
        <end position="520"/>
    </location>
</feature>
<feature type="modified residue" description="Phosphoserine" evidence="7 8">
    <location>
        <position position="161"/>
    </location>
</feature>
<feature type="modified residue" description="Phosphoserine" evidence="8">
    <location>
        <position position="162"/>
    </location>
</feature>
<feature type="modified residue" description="Phosphoserine" evidence="2">
    <location>
        <position position="192"/>
    </location>
</feature>
<feature type="modified residue" description="Phosphotyrosine" evidence="2">
    <location>
        <position position="224"/>
    </location>
</feature>
<feature type="modified residue" description="Phosphoserine" evidence="8">
    <location>
        <position position="503"/>
    </location>
</feature>
<feature type="cross-link" description="Glycyl lysine isopeptide (Lys-Gly) (interchain with G-Cter in SUMO2)" evidence="2">
    <location>
        <position position="171"/>
    </location>
</feature>
<feature type="cross-link" description="Glycyl lysine isopeptide (Lys-Gly) (interchain with G-Cter in SUMO2)" evidence="2">
    <location>
        <position position="432"/>
    </location>
</feature>
<feature type="cross-link" description="Glycyl lysine isopeptide (Lys-Gly) (interchain with G-Cter in SUMO1); alternate" evidence="2">
    <location>
        <position position="498"/>
    </location>
</feature>
<feature type="cross-link" description="Glycyl lysine isopeptide (Lys-Gly) (interchain with G-Cter in SUMO2); alternate" evidence="2">
    <location>
        <position position="498"/>
    </location>
</feature>
<feature type="cross-link" description="Glycyl lysine isopeptide (Lys-Gly) (interchain with G-Cter in SUMO2)" evidence="2">
    <location>
        <position position="661"/>
    </location>
</feature>
<feature type="splice variant" id="VSP_007066" description="In isoform 2." evidence="4">
    <location>
        <begin position="30"/>
        <end position="55"/>
    </location>
</feature>
<feature type="sequence conflict" description="In Ref. 1; BAB28084." evidence="5" ref="1">
    <original>L</original>
    <variation>F</variation>
    <location>
        <position position="238"/>
    </location>
</feature>
<feature type="sequence conflict" description="In Ref. 1; BAB28084." evidence="5" ref="1">
    <original>T</original>
    <variation>A</variation>
    <location>
        <position position="675"/>
    </location>
</feature>
<name>RPC5_MOUSE</name>
<sequence>MANEEDDPVIQEIDVYLAKSLAEKLYLFQYPVRPASMTYDDIPHLSAKIKPKQQKVELEMAIDTLNPNYCRSKGEQIALNVDGACADETSTYSSKLMDKQTFCSSQTTSNTARYAAALYRQGELHLTPLHGILQLRPSFSYLDKADAKHREREAANEAGDSSQDEAEEDVKQITVRFSRPESEQARQRRVQSYEFLQKKHAEEPWVHLHYYGMRDSRSEHERQYLLCQGSSGVENTELVKSPSEYLMMLMPPSPEEEKDKPVAPSNVLSMAQLRTLPLADQIKVLMKNVKVMPFANLMSLLGPSVDSVAVLRGIQKVAMLVQGNWVVKSDILYPKDSSSPHSGMPAEVLCRGRDFVMWKFTQSRWVVRKEVAAVTKLCAEDVKDFLEHMAVVRINKGWEFLLPYDLEFIKKHPDVVQRQHMLWSGIQAKLEKVYNLVKETMPKKPDGQSAPVGLVSGEQRVQTAKTKAQQNHAFLERELQRRKEQMRAATVLPSVQIKEEPLSEEEADGAELEAEEEEPMDTAPSTCLSTKLANGLPAGRAVGGDSLNGHPVPGCASNPVACELKAFVEATFQRQFVLTLSELKRLFNLHLAGLPPGHILFSGVSDRMLQDTVLAAGCKQILVPFPPQTAASPDEQKVFALWESGDMSDQHRQVLLEIFSKNYRVRRNLIQSRLTQECGEELSKQEVDKVLKDCCVSCGGMWYLKGTVQS</sequence>
<reference key="1">
    <citation type="journal article" date="2005" name="Science">
        <title>The transcriptional landscape of the mammalian genome.</title>
        <authorList>
            <person name="Carninci P."/>
            <person name="Kasukawa T."/>
            <person name="Katayama S."/>
            <person name="Gough J."/>
            <person name="Frith M.C."/>
            <person name="Maeda N."/>
            <person name="Oyama R."/>
            <person name="Ravasi T."/>
            <person name="Lenhard B."/>
            <person name="Wells C."/>
            <person name="Kodzius R."/>
            <person name="Shimokawa K."/>
            <person name="Bajic V.B."/>
            <person name="Brenner S.E."/>
            <person name="Batalov S."/>
            <person name="Forrest A.R."/>
            <person name="Zavolan M."/>
            <person name="Davis M.J."/>
            <person name="Wilming L.G."/>
            <person name="Aidinis V."/>
            <person name="Allen J.E."/>
            <person name="Ambesi-Impiombato A."/>
            <person name="Apweiler R."/>
            <person name="Aturaliya R.N."/>
            <person name="Bailey T.L."/>
            <person name="Bansal M."/>
            <person name="Baxter L."/>
            <person name="Beisel K.W."/>
            <person name="Bersano T."/>
            <person name="Bono H."/>
            <person name="Chalk A.M."/>
            <person name="Chiu K.P."/>
            <person name="Choudhary V."/>
            <person name="Christoffels A."/>
            <person name="Clutterbuck D.R."/>
            <person name="Crowe M.L."/>
            <person name="Dalla E."/>
            <person name="Dalrymple B.P."/>
            <person name="de Bono B."/>
            <person name="Della Gatta G."/>
            <person name="di Bernardo D."/>
            <person name="Down T."/>
            <person name="Engstrom P."/>
            <person name="Fagiolini M."/>
            <person name="Faulkner G."/>
            <person name="Fletcher C.F."/>
            <person name="Fukushima T."/>
            <person name="Furuno M."/>
            <person name="Futaki S."/>
            <person name="Gariboldi M."/>
            <person name="Georgii-Hemming P."/>
            <person name="Gingeras T.R."/>
            <person name="Gojobori T."/>
            <person name="Green R.E."/>
            <person name="Gustincich S."/>
            <person name="Harbers M."/>
            <person name="Hayashi Y."/>
            <person name="Hensch T.K."/>
            <person name="Hirokawa N."/>
            <person name="Hill D."/>
            <person name="Huminiecki L."/>
            <person name="Iacono M."/>
            <person name="Ikeo K."/>
            <person name="Iwama A."/>
            <person name="Ishikawa T."/>
            <person name="Jakt M."/>
            <person name="Kanapin A."/>
            <person name="Katoh M."/>
            <person name="Kawasawa Y."/>
            <person name="Kelso J."/>
            <person name="Kitamura H."/>
            <person name="Kitano H."/>
            <person name="Kollias G."/>
            <person name="Krishnan S.P."/>
            <person name="Kruger A."/>
            <person name="Kummerfeld S.K."/>
            <person name="Kurochkin I.V."/>
            <person name="Lareau L.F."/>
            <person name="Lazarevic D."/>
            <person name="Lipovich L."/>
            <person name="Liu J."/>
            <person name="Liuni S."/>
            <person name="McWilliam S."/>
            <person name="Madan Babu M."/>
            <person name="Madera M."/>
            <person name="Marchionni L."/>
            <person name="Matsuda H."/>
            <person name="Matsuzawa S."/>
            <person name="Miki H."/>
            <person name="Mignone F."/>
            <person name="Miyake S."/>
            <person name="Morris K."/>
            <person name="Mottagui-Tabar S."/>
            <person name="Mulder N."/>
            <person name="Nakano N."/>
            <person name="Nakauchi H."/>
            <person name="Ng P."/>
            <person name="Nilsson R."/>
            <person name="Nishiguchi S."/>
            <person name="Nishikawa S."/>
            <person name="Nori F."/>
            <person name="Ohara O."/>
            <person name="Okazaki Y."/>
            <person name="Orlando V."/>
            <person name="Pang K.C."/>
            <person name="Pavan W.J."/>
            <person name="Pavesi G."/>
            <person name="Pesole G."/>
            <person name="Petrovsky N."/>
            <person name="Piazza S."/>
            <person name="Reed J."/>
            <person name="Reid J.F."/>
            <person name="Ring B.Z."/>
            <person name="Ringwald M."/>
            <person name="Rost B."/>
            <person name="Ruan Y."/>
            <person name="Salzberg S.L."/>
            <person name="Sandelin A."/>
            <person name="Schneider C."/>
            <person name="Schoenbach C."/>
            <person name="Sekiguchi K."/>
            <person name="Semple C.A."/>
            <person name="Seno S."/>
            <person name="Sessa L."/>
            <person name="Sheng Y."/>
            <person name="Shibata Y."/>
            <person name="Shimada H."/>
            <person name="Shimada K."/>
            <person name="Silva D."/>
            <person name="Sinclair B."/>
            <person name="Sperling S."/>
            <person name="Stupka E."/>
            <person name="Sugiura K."/>
            <person name="Sultana R."/>
            <person name="Takenaka Y."/>
            <person name="Taki K."/>
            <person name="Tammoja K."/>
            <person name="Tan S.L."/>
            <person name="Tang S."/>
            <person name="Taylor M.S."/>
            <person name="Tegner J."/>
            <person name="Teichmann S.A."/>
            <person name="Ueda H.R."/>
            <person name="van Nimwegen E."/>
            <person name="Verardo R."/>
            <person name="Wei C.L."/>
            <person name="Yagi K."/>
            <person name="Yamanishi H."/>
            <person name="Zabarovsky E."/>
            <person name="Zhu S."/>
            <person name="Zimmer A."/>
            <person name="Hide W."/>
            <person name="Bult C."/>
            <person name="Grimmond S.M."/>
            <person name="Teasdale R.D."/>
            <person name="Liu E.T."/>
            <person name="Brusic V."/>
            <person name="Quackenbush J."/>
            <person name="Wahlestedt C."/>
            <person name="Mattick J.S."/>
            <person name="Hume D.A."/>
            <person name="Kai C."/>
            <person name="Sasaki D."/>
            <person name="Tomaru Y."/>
            <person name="Fukuda S."/>
            <person name="Kanamori-Katayama M."/>
            <person name="Suzuki M."/>
            <person name="Aoki J."/>
            <person name="Arakawa T."/>
            <person name="Iida J."/>
            <person name="Imamura K."/>
            <person name="Itoh M."/>
            <person name="Kato T."/>
            <person name="Kawaji H."/>
            <person name="Kawagashira N."/>
            <person name="Kawashima T."/>
            <person name="Kojima M."/>
            <person name="Kondo S."/>
            <person name="Konno H."/>
            <person name="Nakano K."/>
            <person name="Ninomiya N."/>
            <person name="Nishio T."/>
            <person name="Okada M."/>
            <person name="Plessy C."/>
            <person name="Shibata K."/>
            <person name="Shiraki T."/>
            <person name="Suzuki S."/>
            <person name="Tagami M."/>
            <person name="Waki K."/>
            <person name="Watahiki A."/>
            <person name="Okamura-Oho Y."/>
            <person name="Suzuki H."/>
            <person name="Kawai J."/>
            <person name="Hayashizaki Y."/>
        </authorList>
    </citation>
    <scope>NUCLEOTIDE SEQUENCE [LARGE SCALE MRNA] (ISOFORMS 1 AND 2)</scope>
    <source>
        <strain>C57BL/6J</strain>
        <tissue>Embryo</tissue>
    </source>
</reference>
<reference key="2">
    <citation type="journal article" date="2004" name="Genome Res.">
        <title>The status, quality, and expansion of the NIH full-length cDNA project: the Mammalian Gene Collection (MGC).</title>
        <authorList>
            <consortium name="The MGC Project Team"/>
        </authorList>
    </citation>
    <scope>NUCLEOTIDE SEQUENCE [LARGE SCALE MRNA] (ISOFORM 1)</scope>
    <source>
        <strain>FVB/N-3</strain>
    </source>
</reference>
<reference key="3">
    <citation type="journal article" date="2007" name="Proc. Natl. Acad. Sci. U.S.A.">
        <title>Large-scale phosphorylation analysis of mouse liver.</title>
        <authorList>
            <person name="Villen J."/>
            <person name="Beausoleil S.A."/>
            <person name="Gerber S.A."/>
            <person name="Gygi S.P."/>
        </authorList>
    </citation>
    <scope>PHOSPHORYLATION [LARGE SCALE ANALYSIS] AT SER-161</scope>
    <scope>IDENTIFICATION BY MASS SPECTROMETRY [LARGE SCALE ANALYSIS]</scope>
    <source>
        <tissue>Liver</tissue>
    </source>
</reference>
<reference key="4">
    <citation type="journal article" date="2010" name="Cell">
        <title>A tissue-specific atlas of mouse protein phosphorylation and expression.</title>
        <authorList>
            <person name="Huttlin E.L."/>
            <person name="Jedrychowski M.P."/>
            <person name="Elias J.E."/>
            <person name="Goswami T."/>
            <person name="Rad R."/>
            <person name="Beausoleil S.A."/>
            <person name="Villen J."/>
            <person name="Haas W."/>
            <person name="Sowa M.E."/>
            <person name="Gygi S.P."/>
        </authorList>
    </citation>
    <scope>PHOSPHORYLATION [LARGE SCALE ANALYSIS] AT SER-161; SER-162 AND SER-503</scope>
    <scope>IDENTIFICATION BY MASS SPECTROMETRY [LARGE SCALE ANALYSIS]</scope>
    <source>
        <tissue>Brain</tissue>
        <tissue>Brown adipose tissue</tissue>
        <tissue>Heart</tissue>
        <tissue>Kidney</tissue>
        <tissue>Liver</tissue>
        <tissue>Lung</tissue>
        <tissue>Spleen</tissue>
        <tissue>Testis</tissue>
    </source>
</reference>
<accession>Q9CZT4</accession>
<accession>Q8CI35</accession>
<accession>Q9DBD1</accession>
<keyword id="KW-0025">Alternative splicing</keyword>
<keyword id="KW-0051">Antiviral defense</keyword>
<keyword id="KW-0240">DNA-directed RNA polymerase</keyword>
<keyword id="KW-0391">Immunity</keyword>
<keyword id="KW-0399">Innate immunity</keyword>
<keyword id="KW-1017">Isopeptide bond</keyword>
<keyword id="KW-0539">Nucleus</keyword>
<keyword id="KW-0597">Phosphoprotein</keyword>
<keyword id="KW-1185">Reference proteome</keyword>
<keyword id="KW-0804">Transcription</keyword>
<keyword id="KW-0832">Ubl conjugation</keyword>
<comment type="function">
    <text evidence="1 2">DNA-dependent RNA polymerase catalyzes the transcription of DNA into RNA using the four ribonucleoside triphosphates as substrates (By similarity). Specific peripheric component of RNA polymerase III (Pol III) which synthesizes small non-coding RNAs including 5S rRNA, snRNAs, tRNAs and miRNAs from at least 500 distinct genomic loci. Assembles with POLR3D/RPC4 forming a subcomplex that binds the Pol III core. Enables recruitment of Pol III at transcription initiation site and drives transcription initiation from both type 2 and type 3 DNA promoters. Required for efficient transcription termination and reinitiation (By similarity). Plays a key role in sensing and limiting infection by intracellular bacteria and DNA viruses. Acts as a nuclear and cytosolic DNA sensor involved in innate immune response. Can sense non-self dsDNA that serves as template for transcription into dsRNA. The non-self RNA polymerase III transcripts, such as Epstein-Barr virus-encoded RNAs (EBERs) induce type I interferon and NF-kappa-B through the RIG-I pathway (By similarity).</text>
</comment>
<comment type="subunit">
    <text evidence="2">Component of the RNA polymerase III complex consisting of at least 17 subunits: a ten-subunit horseshoe-shaped catalytic core composed of POLR3A/RPC1, POLR3B/RPC2, POLR1C/RPAC1, POLR1D/RPAC2, POLR3K/RPC10, POLR2E/RPABC1, POLR2F/RPABC2, POLR2H/RPABC3, POLR2K/RPABC4 and POLR2L/RPABC5; the stalk composed of two subunits POLR3H/RPC8 and CRCP/RPC9, forming a structural mobile part that protrudes out of the core and functions primarily in transcription initiation; and additional subunits homologous to general transcription factors of the RNA polymerase II machinery, POLR3D/RPC4-POLR3E/RPC5 heterodimer and POLR3/CRPC3-POLR3F/RPC6-POLR3G/RPC7 heterotrimer.</text>
</comment>
<comment type="subcellular location">
    <subcellularLocation>
        <location evidence="2">Nucleus</location>
    </subcellularLocation>
</comment>
<comment type="alternative products">
    <event type="alternative splicing"/>
    <isoform>
        <id>Q9CZT4-1</id>
        <name>1</name>
        <sequence type="displayed"/>
    </isoform>
    <isoform>
        <id>Q9CZT4-2</id>
        <name>2</name>
        <sequence type="described" ref="VSP_007066"/>
    </isoform>
</comment>
<dbReference type="EMBL" id="AK005034">
    <property type="protein sequence ID" value="BAB23761.1"/>
    <property type="molecule type" value="mRNA"/>
</dbReference>
<dbReference type="EMBL" id="AK012184">
    <property type="protein sequence ID" value="BAB28084.1"/>
    <property type="molecule type" value="mRNA"/>
</dbReference>
<dbReference type="EMBL" id="BC037637">
    <property type="protein sequence ID" value="AAH37637.1"/>
    <property type="molecule type" value="mRNA"/>
</dbReference>
<dbReference type="CCDS" id="CCDS21797.1">
    <molecule id="Q9CZT4-1"/>
</dbReference>
<dbReference type="CCDS" id="CCDS52383.1">
    <molecule id="Q9CZT4-2"/>
</dbReference>
<dbReference type="RefSeq" id="NP_001157568.1">
    <molecule id="Q9CZT4-2"/>
    <property type="nucleotide sequence ID" value="NM_001164096.2"/>
</dbReference>
<dbReference type="RefSeq" id="NP_079574.2">
    <molecule id="Q9CZT4-1"/>
    <property type="nucleotide sequence ID" value="NM_025298.3"/>
</dbReference>
<dbReference type="SMR" id="Q9CZT4"/>
<dbReference type="BioGRID" id="205075">
    <property type="interactions" value="2"/>
</dbReference>
<dbReference type="FunCoup" id="Q9CZT4">
    <property type="interactions" value="3216"/>
</dbReference>
<dbReference type="IntAct" id="Q9CZT4">
    <property type="interactions" value="2"/>
</dbReference>
<dbReference type="STRING" id="10090.ENSMUSP00000033173"/>
<dbReference type="iPTMnet" id="Q9CZT4"/>
<dbReference type="PhosphoSitePlus" id="Q9CZT4"/>
<dbReference type="PaxDb" id="10090-ENSMUSP00000033173"/>
<dbReference type="ProteomicsDB" id="299866">
    <molecule id="Q9CZT4-1"/>
</dbReference>
<dbReference type="ProteomicsDB" id="299867">
    <molecule id="Q9CZT4-2"/>
</dbReference>
<dbReference type="Pumba" id="Q9CZT4"/>
<dbReference type="Antibodypedia" id="25851">
    <property type="antibodies" value="127 antibodies from 23 providers"/>
</dbReference>
<dbReference type="DNASU" id="26939"/>
<dbReference type="Ensembl" id="ENSMUST00000033173.15">
    <molecule id="Q9CZT4-1"/>
    <property type="protein sequence ID" value="ENSMUSP00000033173.8"/>
    <property type="gene ID" value="ENSMUSG00000030880.15"/>
</dbReference>
<dbReference type="Ensembl" id="ENSMUST00000106483.4">
    <molecule id="Q9CZT4-1"/>
    <property type="protein sequence ID" value="ENSMUSP00000102092.4"/>
    <property type="gene ID" value="ENSMUSG00000030880.15"/>
</dbReference>
<dbReference type="Ensembl" id="ENSMUST00000207481.2">
    <molecule id="Q9CZT4-2"/>
    <property type="protein sequence ID" value="ENSMUSP00000146970.2"/>
    <property type="gene ID" value="ENSMUSG00000030880.15"/>
</dbReference>
<dbReference type="GeneID" id="26939"/>
<dbReference type="KEGG" id="mmu:26939"/>
<dbReference type="UCSC" id="uc009jnf.2">
    <molecule id="Q9CZT4-1"/>
    <property type="organism name" value="mouse"/>
</dbReference>
<dbReference type="UCSC" id="uc009jnh.2">
    <molecule id="Q9CZT4-2"/>
    <property type="organism name" value="mouse"/>
</dbReference>
<dbReference type="AGR" id="MGI:1349452"/>
<dbReference type="CTD" id="55718"/>
<dbReference type="MGI" id="MGI:1349452">
    <property type="gene designation" value="Polr3e"/>
</dbReference>
<dbReference type="VEuPathDB" id="HostDB:ENSMUSG00000030880"/>
<dbReference type="eggNOG" id="KOG2354">
    <property type="taxonomic scope" value="Eukaryota"/>
</dbReference>
<dbReference type="GeneTree" id="ENSGT00390000016123"/>
<dbReference type="HOGENOM" id="CLU_021012_1_0_1"/>
<dbReference type="InParanoid" id="Q9CZT4"/>
<dbReference type="OMA" id="KSTCSPH"/>
<dbReference type="OrthoDB" id="340681at2759"/>
<dbReference type="PhylomeDB" id="Q9CZT4"/>
<dbReference type="TreeFam" id="TF103050"/>
<dbReference type="Reactome" id="R-MMU-76061">
    <property type="pathway name" value="RNA Polymerase III Transcription Initiation From Type 1 Promoter"/>
</dbReference>
<dbReference type="Reactome" id="R-MMU-76066">
    <property type="pathway name" value="RNA Polymerase III Transcription Initiation From Type 2 Promoter"/>
</dbReference>
<dbReference type="Reactome" id="R-MMU-76071">
    <property type="pathway name" value="RNA Polymerase III Transcription Initiation From Type 3 Promoter"/>
</dbReference>
<dbReference type="BioGRID-ORCS" id="26939">
    <property type="hits" value="24 hits in 78 CRISPR screens"/>
</dbReference>
<dbReference type="ChiTaRS" id="Polr3e">
    <property type="organism name" value="mouse"/>
</dbReference>
<dbReference type="PRO" id="PR:Q9CZT4"/>
<dbReference type="Proteomes" id="UP000000589">
    <property type="component" value="Chromosome 7"/>
</dbReference>
<dbReference type="RNAct" id="Q9CZT4">
    <property type="molecule type" value="protein"/>
</dbReference>
<dbReference type="Bgee" id="ENSMUSG00000030880">
    <property type="expression patterns" value="Expressed in right kidney and 263 other cell types or tissues"/>
</dbReference>
<dbReference type="GO" id="GO:0005654">
    <property type="term" value="C:nucleoplasm"/>
    <property type="evidence" value="ECO:0007669"/>
    <property type="project" value="Ensembl"/>
</dbReference>
<dbReference type="GO" id="GO:0005666">
    <property type="term" value="C:RNA polymerase III complex"/>
    <property type="evidence" value="ECO:0000266"/>
    <property type="project" value="MGI"/>
</dbReference>
<dbReference type="GO" id="GO:0051607">
    <property type="term" value="P:defense response to virus"/>
    <property type="evidence" value="ECO:0007669"/>
    <property type="project" value="UniProtKB-KW"/>
</dbReference>
<dbReference type="GO" id="GO:0006351">
    <property type="term" value="P:DNA-templated transcription"/>
    <property type="evidence" value="ECO:0007669"/>
    <property type="project" value="InterPro"/>
</dbReference>
<dbReference type="GO" id="GO:0045087">
    <property type="term" value="P:innate immune response"/>
    <property type="evidence" value="ECO:0007669"/>
    <property type="project" value="UniProtKB-KW"/>
</dbReference>
<dbReference type="InterPro" id="IPR006886">
    <property type="entry name" value="RNA_pol_III_Rpc5"/>
</dbReference>
<dbReference type="InterPro" id="IPR045576">
    <property type="entry name" value="RPC5_C"/>
</dbReference>
<dbReference type="PANTHER" id="PTHR12069:SF0">
    <property type="entry name" value="DNA-DIRECTED RNA POLYMERASE III SUBUNIT RPC5"/>
    <property type="match status" value="1"/>
</dbReference>
<dbReference type="PANTHER" id="PTHR12069">
    <property type="entry name" value="DNA-DIRECTED RNA POLYMERASES III 80 KDA POLYPEPTIDE RNA POLYMERASE III SUBUNIT 5"/>
    <property type="match status" value="1"/>
</dbReference>
<dbReference type="Pfam" id="PF04801">
    <property type="entry name" value="RPC5"/>
    <property type="match status" value="1"/>
</dbReference>
<dbReference type="Pfam" id="PF19725">
    <property type="entry name" value="RPC5_C"/>
    <property type="match status" value="1"/>
</dbReference>
<protein>
    <recommendedName>
        <fullName>DNA-directed RNA polymerase III subunit RPC5</fullName>
        <shortName>RNA polymerase III subunit 5</shortName>
        <shortName>RNA polymerase III subunit C5</shortName>
    </recommendedName>
    <alternativeName>
        <fullName>Sex-lethal interactor homolog</fullName>
        <shortName>Sxl interactor</shortName>
    </alternativeName>
</protein>
<proteinExistence type="evidence at protein level"/>
<organism>
    <name type="scientific">Mus musculus</name>
    <name type="common">Mouse</name>
    <dbReference type="NCBI Taxonomy" id="10090"/>
    <lineage>
        <taxon>Eukaryota</taxon>
        <taxon>Metazoa</taxon>
        <taxon>Chordata</taxon>
        <taxon>Craniata</taxon>
        <taxon>Vertebrata</taxon>
        <taxon>Euteleostomi</taxon>
        <taxon>Mammalia</taxon>
        <taxon>Eutheria</taxon>
        <taxon>Euarchontoglires</taxon>
        <taxon>Glires</taxon>
        <taxon>Rodentia</taxon>
        <taxon>Myomorpha</taxon>
        <taxon>Muroidea</taxon>
        <taxon>Muridae</taxon>
        <taxon>Murinae</taxon>
        <taxon>Mus</taxon>
        <taxon>Mus</taxon>
    </lineage>
</organism>
<evidence type="ECO:0000250" key="1">
    <source>
        <dbReference type="UniProtKB" id="P36121"/>
    </source>
</evidence>
<evidence type="ECO:0000250" key="2">
    <source>
        <dbReference type="UniProtKB" id="Q9NVU0"/>
    </source>
</evidence>
<evidence type="ECO:0000256" key="3">
    <source>
        <dbReference type="SAM" id="MobiDB-lite"/>
    </source>
</evidence>
<evidence type="ECO:0000303" key="4">
    <source>
    </source>
</evidence>
<evidence type="ECO:0000305" key="5"/>
<evidence type="ECO:0000312" key="6">
    <source>
        <dbReference type="MGI" id="MGI:1349452"/>
    </source>
</evidence>
<evidence type="ECO:0007744" key="7">
    <source>
    </source>
</evidence>
<evidence type="ECO:0007744" key="8">
    <source>
    </source>
</evidence>
<gene>
    <name evidence="6" type="primary">Polr3e</name>
    <name type="synonym">Sin</name>
</gene>